<organism>
    <name type="scientific">Francisella tularensis subsp. tularensis (strain WY96-3418)</name>
    <dbReference type="NCBI Taxonomy" id="418136"/>
    <lineage>
        <taxon>Bacteria</taxon>
        <taxon>Pseudomonadati</taxon>
        <taxon>Pseudomonadota</taxon>
        <taxon>Gammaproteobacteria</taxon>
        <taxon>Thiotrichales</taxon>
        <taxon>Francisellaceae</taxon>
        <taxon>Francisella</taxon>
    </lineage>
</organism>
<dbReference type="EC" id="2.4.1.21" evidence="1"/>
<dbReference type="EMBL" id="CP000608">
    <property type="protein sequence ID" value="ABO47349.1"/>
    <property type="molecule type" value="Genomic_DNA"/>
</dbReference>
<dbReference type="RefSeq" id="WP_003020156.1">
    <property type="nucleotide sequence ID" value="NC_009257.1"/>
</dbReference>
<dbReference type="SMR" id="A4IZJ9"/>
<dbReference type="CAZy" id="GT5">
    <property type="family name" value="Glycosyltransferase Family 5"/>
</dbReference>
<dbReference type="KEGG" id="ftw:FTW_1657"/>
<dbReference type="HOGENOM" id="CLU_009583_18_2_6"/>
<dbReference type="UniPathway" id="UPA00164"/>
<dbReference type="GO" id="GO:0005829">
    <property type="term" value="C:cytosol"/>
    <property type="evidence" value="ECO:0007669"/>
    <property type="project" value="TreeGrafter"/>
</dbReference>
<dbReference type="GO" id="GO:0009011">
    <property type="term" value="F:alpha-1,4-glucan glucosyltransferase (ADP-glucose donor) activity"/>
    <property type="evidence" value="ECO:0007669"/>
    <property type="project" value="UniProtKB-UniRule"/>
</dbReference>
<dbReference type="GO" id="GO:0004373">
    <property type="term" value="F:alpha-1,4-glucan glucosyltransferase (UDP-glucose donor) activity"/>
    <property type="evidence" value="ECO:0007669"/>
    <property type="project" value="InterPro"/>
</dbReference>
<dbReference type="GO" id="GO:0005978">
    <property type="term" value="P:glycogen biosynthetic process"/>
    <property type="evidence" value="ECO:0007669"/>
    <property type="project" value="UniProtKB-UniRule"/>
</dbReference>
<dbReference type="CDD" id="cd03791">
    <property type="entry name" value="GT5_Glycogen_synthase_DULL1-like"/>
    <property type="match status" value="1"/>
</dbReference>
<dbReference type="Gene3D" id="3.40.50.2000">
    <property type="entry name" value="Glycogen Phosphorylase B"/>
    <property type="match status" value="2"/>
</dbReference>
<dbReference type="HAMAP" id="MF_00484">
    <property type="entry name" value="Glycogen_synth"/>
    <property type="match status" value="1"/>
</dbReference>
<dbReference type="InterPro" id="IPR001296">
    <property type="entry name" value="Glyco_trans_1"/>
</dbReference>
<dbReference type="InterPro" id="IPR011835">
    <property type="entry name" value="GS/SS"/>
</dbReference>
<dbReference type="InterPro" id="IPR013534">
    <property type="entry name" value="Starch_synth_cat_dom"/>
</dbReference>
<dbReference type="NCBIfam" id="TIGR02095">
    <property type="entry name" value="glgA"/>
    <property type="match status" value="1"/>
</dbReference>
<dbReference type="NCBIfam" id="NF001899">
    <property type="entry name" value="PRK00654.1-2"/>
    <property type="match status" value="1"/>
</dbReference>
<dbReference type="PANTHER" id="PTHR45825:SF11">
    <property type="entry name" value="ALPHA AMYLASE DOMAIN-CONTAINING PROTEIN"/>
    <property type="match status" value="1"/>
</dbReference>
<dbReference type="PANTHER" id="PTHR45825">
    <property type="entry name" value="GRANULE-BOUND STARCH SYNTHASE 1, CHLOROPLASTIC/AMYLOPLASTIC"/>
    <property type="match status" value="1"/>
</dbReference>
<dbReference type="Pfam" id="PF08323">
    <property type="entry name" value="Glyco_transf_5"/>
    <property type="match status" value="1"/>
</dbReference>
<dbReference type="Pfam" id="PF00534">
    <property type="entry name" value="Glycos_transf_1"/>
    <property type="match status" value="1"/>
</dbReference>
<dbReference type="SUPFAM" id="SSF53756">
    <property type="entry name" value="UDP-Glycosyltransferase/glycogen phosphorylase"/>
    <property type="match status" value="1"/>
</dbReference>
<keyword id="KW-0320">Glycogen biosynthesis</keyword>
<keyword id="KW-0328">Glycosyltransferase</keyword>
<keyword id="KW-0808">Transferase</keyword>
<sequence>MRVLHVCSELYPILKTGGLADVTAALPPALAGFGVDSRVLVPGFPAFINAIKDKQLLINIPSRFGAEEINIFLAKISNTKIDIYVIDAPSLFARPGNPYADSSNQAYADNYLRFALLGWVAARISEGLDAKWKPEIVHSHDWHAGLVPAYIKASELASGKKAVKTVFTVHNLAYQGLFPMSVFAELDLPGIFLSMNGLEFYGQVSFMKAGLYFADKITTVSPTYAKEIQIYEQGCGLEGLLADRHNDLYGVLNGVDPQIWNPKKDSLIATNYSSTTVATGKAKCKLALQQMMGLAEKEDALLFGIVTRLTEQKGLNLLIEAIGEITSRGGQIVLLGSGDKALEEVFLAAAKKYSKSIAVQIGYDEEQAHRIIAGSDVIMVPSRFEPCGLTQLYGLTYGTLPLVHKVGGLADTVIDSSLENLADGTATGFVFDEFSVESLTLAIRRAFALYNRKTDWKKVRKTAMQQQVTWDSSAEKIYQIYKNLVRENN</sequence>
<proteinExistence type="inferred from homology"/>
<feature type="chain" id="PRO_1000014359" description="Glycogen synthase">
    <location>
        <begin position="1"/>
        <end position="489"/>
    </location>
</feature>
<feature type="binding site" evidence="1">
    <location>
        <position position="15"/>
    </location>
    <ligand>
        <name>ADP-alpha-D-glucose</name>
        <dbReference type="ChEBI" id="CHEBI:57498"/>
    </ligand>
</feature>
<reference key="1">
    <citation type="journal article" date="2007" name="PLoS ONE">
        <title>Complete genomic characterization of a pathogenic A.II strain of Francisella tularensis subspecies tularensis.</title>
        <authorList>
            <person name="Beckstrom-Sternberg S.M."/>
            <person name="Auerbach R.K."/>
            <person name="Godbole S."/>
            <person name="Pearson J.V."/>
            <person name="Beckstrom-Sternberg J.S."/>
            <person name="Deng Z."/>
            <person name="Munk C."/>
            <person name="Kubota K."/>
            <person name="Zhou Y."/>
            <person name="Bruce D."/>
            <person name="Noronha J."/>
            <person name="Scheuermann R.H."/>
            <person name="Wang A."/>
            <person name="Wei X."/>
            <person name="Wang J."/>
            <person name="Hao J."/>
            <person name="Wagner D.M."/>
            <person name="Brettin T.S."/>
            <person name="Brown N."/>
            <person name="Gilna P."/>
            <person name="Keim P.S."/>
        </authorList>
    </citation>
    <scope>NUCLEOTIDE SEQUENCE [LARGE SCALE GENOMIC DNA]</scope>
    <source>
        <strain>WY96-3418</strain>
    </source>
</reference>
<protein>
    <recommendedName>
        <fullName evidence="1">Glycogen synthase</fullName>
        <ecNumber evidence="1">2.4.1.21</ecNumber>
    </recommendedName>
    <alternativeName>
        <fullName evidence="1">Starch [bacterial glycogen] synthase</fullName>
    </alternativeName>
</protein>
<gene>
    <name evidence="1" type="primary">glgA</name>
    <name type="ordered locus">FTW_1657</name>
</gene>
<comment type="function">
    <text evidence="1">Synthesizes alpha-1,4-glucan chains using ADP-glucose.</text>
</comment>
<comment type="catalytic activity">
    <reaction evidence="1">
        <text>[(1-&gt;4)-alpha-D-glucosyl](n) + ADP-alpha-D-glucose = [(1-&gt;4)-alpha-D-glucosyl](n+1) + ADP + H(+)</text>
        <dbReference type="Rhea" id="RHEA:18189"/>
        <dbReference type="Rhea" id="RHEA-COMP:9584"/>
        <dbReference type="Rhea" id="RHEA-COMP:9587"/>
        <dbReference type="ChEBI" id="CHEBI:15378"/>
        <dbReference type="ChEBI" id="CHEBI:15444"/>
        <dbReference type="ChEBI" id="CHEBI:57498"/>
        <dbReference type="ChEBI" id="CHEBI:456216"/>
        <dbReference type="EC" id="2.4.1.21"/>
    </reaction>
</comment>
<comment type="pathway">
    <text evidence="1">Glycan biosynthesis; glycogen biosynthesis.</text>
</comment>
<comment type="similarity">
    <text evidence="1">Belongs to the glycosyltransferase 1 family. Bacterial/plant glycogen synthase subfamily.</text>
</comment>
<evidence type="ECO:0000255" key="1">
    <source>
        <dbReference type="HAMAP-Rule" id="MF_00484"/>
    </source>
</evidence>
<accession>A4IZJ9</accession>
<name>GLGA_FRATW</name>